<comment type="subcellular location">
    <subcellularLocation>
        <location evidence="1">Cytoplasm</location>
    </subcellularLocation>
</comment>
<comment type="similarity">
    <text evidence="2">Belongs to the YqgB family.</text>
</comment>
<comment type="sequence caution" evidence="2">
    <conflict type="erroneous initiation">
        <sequence resource="EMBL-CDS" id="ABB63147"/>
    </conflict>
    <text>Extended N-terminus.</text>
</comment>
<evidence type="ECO:0000250" key="1"/>
<evidence type="ECO:0000305" key="2"/>
<gene>
    <name type="primary">yqgB</name>
    <name type="ordered locus">SDY_3133</name>
</gene>
<proteinExistence type="inferred from homology"/>
<feature type="chain" id="PRO_0000294098" description="Uncharacterized protein YqgB">
    <location>
        <begin position="1"/>
        <end position="43"/>
    </location>
</feature>
<name>YQGB_SHIDS</name>
<accession>Q32C08</accession>
<sequence length="43" mass="4859">MKKKPVAQLERQHSLLENPCAYGLLSQFQAAIVVNCFTLNKII</sequence>
<organism>
    <name type="scientific">Shigella dysenteriae serotype 1 (strain Sd197)</name>
    <dbReference type="NCBI Taxonomy" id="300267"/>
    <lineage>
        <taxon>Bacteria</taxon>
        <taxon>Pseudomonadati</taxon>
        <taxon>Pseudomonadota</taxon>
        <taxon>Gammaproteobacteria</taxon>
        <taxon>Enterobacterales</taxon>
        <taxon>Enterobacteriaceae</taxon>
        <taxon>Shigella</taxon>
    </lineage>
</organism>
<keyword id="KW-0963">Cytoplasm</keyword>
<keyword id="KW-1185">Reference proteome</keyword>
<reference key="1">
    <citation type="journal article" date="2005" name="Nucleic Acids Res.">
        <title>Genome dynamics and diversity of Shigella species, the etiologic agents of bacillary dysentery.</title>
        <authorList>
            <person name="Yang F."/>
            <person name="Yang J."/>
            <person name="Zhang X."/>
            <person name="Chen L."/>
            <person name="Jiang Y."/>
            <person name="Yan Y."/>
            <person name="Tang X."/>
            <person name="Wang J."/>
            <person name="Xiong Z."/>
            <person name="Dong J."/>
            <person name="Xue Y."/>
            <person name="Zhu Y."/>
            <person name="Xu X."/>
            <person name="Sun L."/>
            <person name="Chen S."/>
            <person name="Nie H."/>
            <person name="Peng J."/>
            <person name="Xu J."/>
            <person name="Wang Y."/>
            <person name="Yuan Z."/>
            <person name="Wen Y."/>
            <person name="Yao Z."/>
            <person name="Shen Y."/>
            <person name="Qiang B."/>
            <person name="Hou Y."/>
            <person name="Yu J."/>
            <person name="Jin Q."/>
        </authorList>
    </citation>
    <scope>NUCLEOTIDE SEQUENCE [LARGE SCALE GENOMIC DNA]</scope>
    <source>
        <strain>Sd197</strain>
    </source>
</reference>
<protein>
    <recommendedName>
        <fullName>Uncharacterized protein YqgB</fullName>
    </recommendedName>
</protein>
<dbReference type="EMBL" id="CP000034">
    <property type="protein sequence ID" value="ABB63147.1"/>
    <property type="status" value="ALT_INIT"/>
    <property type="molecule type" value="Genomic_DNA"/>
</dbReference>
<dbReference type="RefSeq" id="WP_001297406.1">
    <property type="nucleotide sequence ID" value="NC_007606.1"/>
</dbReference>
<dbReference type="RefSeq" id="YP_404638.1">
    <property type="nucleotide sequence ID" value="NC_007606.1"/>
</dbReference>
<dbReference type="STRING" id="300267.SDY_3133"/>
<dbReference type="EnsemblBacteria" id="ABB63147">
    <property type="protein sequence ID" value="ABB63147"/>
    <property type="gene ID" value="SDY_3133"/>
</dbReference>
<dbReference type="GeneID" id="93779056"/>
<dbReference type="KEGG" id="sdy:SDY_3133"/>
<dbReference type="PATRIC" id="fig|300267.13.peg.3742"/>
<dbReference type="HOGENOM" id="CLU_216465_0_0_6"/>
<dbReference type="Proteomes" id="UP000002716">
    <property type="component" value="Chromosome"/>
</dbReference>
<dbReference type="GO" id="GO:0005737">
    <property type="term" value="C:cytoplasm"/>
    <property type="evidence" value="ECO:0007669"/>
    <property type="project" value="UniProtKB-SubCell"/>
</dbReference>
<dbReference type="InterPro" id="IPR020196">
    <property type="entry name" value="Uncharacterised_YqgB"/>
</dbReference>
<dbReference type="NCBIfam" id="NF033844">
    <property type="entry name" value="small_YqgB"/>
    <property type="match status" value="1"/>
</dbReference>
<dbReference type="Pfam" id="PF11036">
    <property type="entry name" value="YqgB"/>
    <property type="match status" value="1"/>
</dbReference>